<gene>
    <name evidence="1" type="primary">nrdI</name>
    <name type="ordered locus">E2348C_2939</name>
</gene>
<feature type="chain" id="PRO_1000191756" description="Protein NrdI">
    <location>
        <begin position="1"/>
        <end position="136"/>
    </location>
</feature>
<keyword id="KW-1185">Reference proteome</keyword>
<sequence length="136" mass="15212">MSQLVYFSSSSENTQRFIERLGLPAVRIPLNERERIQVDEPYILIVPSYGGGGTAGAVPRPVIRFLNDEHNRALLRGVIASGNRNFGEAYGRAGDVIAQKCGVPWLYSFELMGTQSDIENVRKGVTEFWQRQPQNA</sequence>
<evidence type="ECO:0000255" key="1">
    <source>
        <dbReference type="HAMAP-Rule" id="MF_00128"/>
    </source>
</evidence>
<reference key="1">
    <citation type="journal article" date="2009" name="J. Bacteriol.">
        <title>Complete genome sequence and comparative genome analysis of enteropathogenic Escherichia coli O127:H6 strain E2348/69.</title>
        <authorList>
            <person name="Iguchi A."/>
            <person name="Thomson N.R."/>
            <person name="Ogura Y."/>
            <person name="Saunders D."/>
            <person name="Ooka T."/>
            <person name="Henderson I.R."/>
            <person name="Harris D."/>
            <person name="Asadulghani M."/>
            <person name="Kurokawa K."/>
            <person name="Dean P."/>
            <person name="Kenny B."/>
            <person name="Quail M.A."/>
            <person name="Thurston S."/>
            <person name="Dougan G."/>
            <person name="Hayashi T."/>
            <person name="Parkhill J."/>
            <person name="Frankel G."/>
        </authorList>
    </citation>
    <scope>NUCLEOTIDE SEQUENCE [LARGE SCALE GENOMIC DNA]</scope>
    <source>
        <strain>E2348/69 / EPEC</strain>
    </source>
</reference>
<name>NRDI_ECO27</name>
<organism>
    <name type="scientific">Escherichia coli O127:H6 (strain E2348/69 / EPEC)</name>
    <dbReference type="NCBI Taxonomy" id="574521"/>
    <lineage>
        <taxon>Bacteria</taxon>
        <taxon>Pseudomonadati</taxon>
        <taxon>Pseudomonadota</taxon>
        <taxon>Gammaproteobacteria</taxon>
        <taxon>Enterobacterales</taxon>
        <taxon>Enterobacteriaceae</taxon>
        <taxon>Escherichia</taxon>
    </lineage>
</organism>
<proteinExistence type="inferred from homology"/>
<protein>
    <recommendedName>
        <fullName evidence="1">Protein NrdI</fullName>
    </recommendedName>
</protein>
<comment type="function">
    <text evidence="1">Probably involved in ribonucleotide reductase function.</text>
</comment>
<comment type="similarity">
    <text evidence="1">Belongs to the NrdI family.</text>
</comment>
<accession>B7UH94</accession>
<dbReference type="EMBL" id="FM180568">
    <property type="protein sequence ID" value="CAS10487.1"/>
    <property type="molecule type" value="Genomic_DNA"/>
</dbReference>
<dbReference type="RefSeq" id="WP_000080940.1">
    <property type="nucleotide sequence ID" value="NC_011601.1"/>
</dbReference>
<dbReference type="SMR" id="B7UH94"/>
<dbReference type="KEGG" id="ecg:E2348C_2939"/>
<dbReference type="HOGENOM" id="CLU_114845_0_0_6"/>
<dbReference type="Proteomes" id="UP000008205">
    <property type="component" value="Chromosome"/>
</dbReference>
<dbReference type="GO" id="GO:0010181">
    <property type="term" value="F:FMN binding"/>
    <property type="evidence" value="ECO:0007669"/>
    <property type="project" value="InterPro"/>
</dbReference>
<dbReference type="GO" id="GO:0036211">
    <property type="term" value="P:protein modification process"/>
    <property type="evidence" value="ECO:0007669"/>
    <property type="project" value="InterPro"/>
</dbReference>
<dbReference type="FunFam" id="3.40.50.360:FF:000005">
    <property type="entry name" value="Protein NrdI"/>
    <property type="match status" value="1"/>
</dbReference>
<dbReference type="Gene3D" id="3.40.50.360">
    <property type="match status" value="1"/>
</dbReference>
<dbReference type="HAMAP" id="MF_00128">
    <property type="entry name" value="NrdI"/>
    <property type="match status" value="1"/>
</dbReference>
<dbReference type="InterPro" id="IPR029039">
    <property type="entry name" value="Flavoprotein-like_sf"/>
</dbReference>
<dbReference type="InterPro" id="IPR020852">
    <property type="entry name" value="RNR_Ib_NrdI_bac"/>
</dbReference>
<dbReference type="InterPro" id="IPR004465">
    <property type="entry name" value="RNR_NrdI"/>
</dbReference>
<dbReference type="NCBIfam" id="TIGR00333">
    <property type="entry name" value="nrdI"/>
    <property type="match status" value="1"/>
</dbReference>
<dbReference type="PANTHER" id="PTHR37297">
    <property type="entry name" value="PROTEIN NRDI"/>
    <property type="match status" value="1"/>
</dbReference>
<dbReference type="PANTHER" id="PTHR37297:SF1">
    <property type="entry name" value="PROTEIN NRDI"/>
    <property type="match status" value="1"/>
</dbReference>
<dbReference type="Pfam" id="PF07972">
    <property type="entry name" value="Flavodoxin_NdrI"/>
    <property type="match status" value="1"/>
</dbReference>
<dbReference type="PIRSF" id="PIRSF005087">
    <property type="entry name" value="NrdI"/>
    <property type="match status" value="1"/>
</dbReference>
<dbReference type="SUPFAM" id="SSF52218">
    <property type="entry name" value="Flavoproteins"/>
    <property type="match status" value="1"/>
</dbReference>